<protein>
    <recommendedName>
        <fullName evidence="1">Pyrrolidone-carboxylate peptidase</fullName>
        <ecNumber evidence="1">3.4.19.3</ecNumber>
    </recommendedName>
    <alternativeName>
        <fullName evidence="1">5-oxoprolyl-peptidase</fullName>
    </alternativeName>
    <alternativeName>
        <fullName evidence="1">Pyroglutamyl-peptidase I</fullName>
        <shortName evidence="1">PGP-I</shortName>
        <shortName evidence="1">Pyrase</shortName>
    </alternativeName>
</protein>
<name>PCP_CLOBA</name>
<gene>
    <name evidence="1" type="primary">pcp</name>
    <name type="ordered locus">CLH_1446</name>
</gene>
<evidence type="ECO:0000255" key="1">
    <source>
        <dbReference type="HAMAP-Rule" id="MF_00417"/>
    </source>
</evidence>
<keyword id="KW-0963">Cytoplasm</keyword>
<keyword id="KW-0378">Hydrolase</keyword>
<keyword id="KW-0645">Protease</keyword>
<keyword id="KW-0788">Thiol protease</keyword>
<dbReference type="EC" id="3.4.19.3" evidence="1"/>
<dbReference type="EMBL" id="CP001078">
    <property type="protein sequence ID" value="ACD51641.1"/>
    <property type="molecule type" value="Genomic_DNA"/>
</dbReference>
<dbReference type="RefSeq" id="WP_012449958.1">
    <property type="nucleotide sequence ID" value="NC_010723.1"/>
</dbReference>
<dbReference type="SMR" id="B2UZU4"/>
<dbReference type="MEROPS" id="C15.001"/>
<dbReference type="KEGG" id="cbt:CLH_1446"/>
<dbReference type="HOGENOM" id="CLU_043960_4_0_9"/>
<dbReference type="GO" id="GO:0005829">
    <property type="term" value="C:cytosol"/>
    <property type="evidence" value="ECO:0007669"/>
    <property type="project" value="InterPro"/>
</dbReference>
<dbReference type="GO" id="GO:0016920">
    <property type="term" value="F:pyroglutamyl-peptidase activity"/>
    <property type="evidence" value="ECO:0007669"/>
    <property type="project" value="UniProtKB-UniRule"/>
</dbReference>
<dbReference type="GO" id="GO:0006508">
    <property type="term" value="P:proteolysis"/>
    <property type="evidence" value="ECO:0007669"/>
    <property type="project" value="UniProtKB-KW"/>
</dbReference>
<dbReference type="CDD" id="cd00501">
    <property type="entry name" value="Peptidase_C15"/>
    <property type="match status" value="1"/>
</dbReference>
<dbReference type="FunFam" id="3.40.630.20:FF:000001">
    <property type="entry name" value="Pyrrolidone-carboxylate peptidase"/>
    <property type="match status" value="1"/>
</dbReference>
<dbReference type="Gene3D" id="3.40.630.20">
    <property type="entry name" value="Peptidase C15, pyroglutamyl peptidase I-like"/>
    <property type="match status" value="1"/>
</dbReference>
<dbReference type="HAMAP" id="MF_00417">
    <property type="entry name" value="Pyrrolid_peptidase"/>
    <property type="match status" value="1"/>
</dbReference>
<dbReference type="InterPro" id="IPR000816">
    <property type="entry name" value="Peptidase_C15"/>
</dbReference>
<dbReference type="InterPro" id="IPR016125">
    <property type="entry name" value="Peptidase_C15-like"/>
</dbReference>
<dbReference type="InterPro" id="IPR036440">
    <property type="entry name" value="Peptidase_C15-like_sf"/>
</dbReference>
<dbReference type="InterPro" id="IPR029762">
    <property type="entry name" value="PGP-I_bact-type"/>
</dbReference>
<dbReference type="InterPro" id="IPR033694">
    <property type="entry name" value="PGPEP1_Cys_AS"/>
</dbReference>
<dbReference type="InterPro" id="IPR033693">
    <property type="entry name" value="PGPEP1_Glu_AS"/>
</dbReference>
<dbReference type="NCBIfam" id="NF009676">
    <property type="entry name" value="PRK13197.1"/>
    <property type="match status" value="1"/>
</dbReference>
<dbReference type="NCBIfam" id="TIGR00504">
    <property type="entry name" value="pyro_pdase"/>
    <property type="match status" value="1"/>
</dbReference>
<dbReference type="PANTHER" id="PTHR23402">
    <property type="entry name" value="PROTEASE FAMILY C15 PYROGLUTAMYL-PEPTIDASE I-RELATED"/>
    <property type="match status" value="1"/>
</dbReference>
<dbReference type="PANTHER" id="PTHR23402:SF1">
    <property type="entry name" value="PYROGLUTAMYL-PEPTIDASE I"/>
    <property type="match status" value="1"/>
</dbReference>
<dbReference type="Pfam" id="PF01470">
    <property type="entry name" value="Peptidase_C15"/>
    <property type="match status" value="1"/>
</dbReference>
<dbReference type="PIRSF" id="PIRSF015592">
    <property type="entry name" value="Prld-crbxl_pptds"/>
    <property type="match status" value="1"/>
</dbReference>
<dbReference type="PRINTS" id="PR00706">
    <property type="entry name" value="PYROGLUPTASE"/>
</dbReference>
<dbReference type="SUPFAM" id="SSF53182">
    <property type="entry name" value="Pyrrolidone carboxyl peptidase (pyroglutamate aminopeptidase)"/>
    <property type="match status" value="1"/>
</dbReference>
<dbReference type="PROSITE" id="PS01334">
    <property type="entry name" value="PYRASE_CYS"/>
    <property type="match status" value="1"/>
</dbReference>
<dbReference type="PROSITE" id="PS01333">
    <property type="entry name" value="PYRASE_GLU"/>
    <property type="match status" value="1"/>
</dbReference>
<feature type="chain" id="PRO_1000123991" description="Pyrrolidone-carboxylate peptidase">
    <location>
        <begin position="1"/>
        <end position="213"/>
    </location>
</feature>
<feature type="active site" evidence="1">
    <location>
        <position position="78"/>
    </location>
</feature>
<feature type="active site" evidence="1">
    <location>
        <position position="141"/>
    </location>
</feature>
<feature type="active site" evidence="1">
    <location>
        <position position="165"/>
    </location>
</feature>
<reference key="1">
    <citation type="submission" date="2008-05" db="EMBL/GenBank/DDBJ databases">
        <title>Complete genome sequence of Clostridium botulinum E3 str. Alaska E43.</title>
        <authorList>
            <person name="Brinkac L.M."/>
            <person name="Brown J.L."/>
            <person name="Bruce D."/>
            <person name="Detter C."/>
            <person name="Munk C."/>
            <person name="Smith L.A."/>
            <person name="Smith T.J."/>
            <person name="Sutton G."/>
            <person name="Brettin T.S."/>
        </authorList>
    </citation>
    <scope>NUCLEOTIDE SEQUENCE [LARGE SCALE GENOMIC DNA]</scope>
    <source>
        <strain>Alaska E43 / Type E3</strain>
    </source>
</reference>
<organism>
    <name type="scientific">Clostridium botulinum (strain Alaska E43 / Type E3)</name>
    <dbReference type="NCBI Taxonomy" id="508767"/>
    <lineage>
        <taxon>Bacteria</taxon>
        <taxon>Bacillati</taxon>
        <taxon>Bacillota</taxon>
        <taxon>Clostridia</taxon>
        <taxon>Eubacteriales</taxon>
        <taxon>Clostridiaceae</taxon>
        <taxon>Clostridium</taxon>
    </lineage>
</organism>
<accession>B2UZU4</accession>
<comment type="function">
    <text evidence="1">Removes 5-oxoproline from various penultimate amino acid residues except L-proline.</text>
</comment>
<comment type="catalytic activity">
    <reaction evidence="1">
        <text>Release of an N-terminal pyroglutamyl group from a polypeptide, the second amino acid generally not being Pro.</text>
        <dbReference type="EC" id="3.4.19.3"/>
    </reaction>
</comment>
<comment type="subunit">
    <text evidence="1">Homotetramer.</text>
</comment>
<comment type="subcellular location">
    <subcellularLocation>
        <location evidence="1">Cytoplasm</location>
    </subcellularLocation>
</comment>
<comment type="similarity">
    <text evidence="1">Belongs to the peptidase C15 family.</text>
</comment>
<proteinExistence type="inferred from homology"/>
<sequence length="213" mass="23234">MKVLITGFDPFGGESINPALEAVKKLPNTISNAEIIKLEIPTVFKKSLEKIEANILAHKPDIVISIGQAGGRFGITPERVAINIDDARIEDNEKNQPIDLKVFEDGENAYFTTLPIKAMVKEMQESGIPSSVSNSAGTFVCNHVMYGVLYMINKKYPNIKGGFIHVPYIPSQVVSKPNMPSMSIEDISKGLELSVKAAVENNTDIKTAQGEIC</sequence>